<accession>Q18253</accession>
<protein>
    <recommendedName>
        <fullName>Dipeptidyl peptidase family member 2</fullName>
        <ecNumber>3.4.14.-</ecNumber>
    </recommendedName>
</protein>
<keyword id="KW-0031">Aminopeptidase</keyword>
<keyword id="KW-1003">Cell membrane</keyword>
<keyword id="KW-1015">Disulfide bond</keyword>
<keyword id="KW-0325">Glycoprotein</keyword>
<keyword id="KW-0378">Hydrolase</keyword>
<keyword id="KW-0472">Membrane</keyword>
<keyword id="KW-0645">Protease</keyword>
<keyword id="KW-1185">Reference proteome</keyword>
<keyword id="KW-0720">Serine protease</keyword>
<keyword id="KW-0735">Signal-anchor</keyword>
<keyword id="KW-0812">Transmembrane</keyword>
<keyword id="KW-1133">Transmembrane helix</keyword>
<name>DPF2_CAEEL</name>
<sequence length="829" mass="94387">MENDNYDVEEQGCSVFNGKHGYFARSCCVVFILIICVIFVFSVIFTFMQNPINLNSDNGFNQTSGNTSSLEATTLKPKFSSLMTTTRRFTFEQLFSGKQFLVDYYDYIWLPDGSFVQMNDDFTIRKQMKKIPLGSSVAEPFFNNGEYVKALSSNMKYAYGSKKVNELWRHSAEYLYHIVKINNKTVSTEQWHVGPEENSLIQAFYWNPNASSNDFVYVHNYNLYYQKDPEKPDGAIQLTVGGSTFNRFGLANWLYEEEILEASSAVWWSPSGRYVSYLRFDDREVNRIFLPKYTDDDSYVEYFELPYPKAGVQNNTLVTQYIWDSENHKIVETAPPNELSAANGDYYVLTNKWITMPRNGSDLGEERLVTVWANRDQNHVYFSLCNEQDCVMALSFQFSIDNRQLWVSPKDVRGVFPTETGFLTVLPHKHDDGNIYNHVAHVELDGTGTGKITKWIGENFDVILVLGYSSKIDALTFSAYGDGVGEFSTYIVREAMYSNKKTTLQKVTDQFEDCKTLGSQSADPTGQRIVVQCEKPFDNTRLYLVDVVDTTKKIMLEGGTKAVIPFDVPNMKFGKLKLPSGIDGHYMMLTPANLLDGAKIPLLLDIYGGPDSKQVFQKTPTAHAIQIVSQYDIAYARIDVRGTGGRGWDVKEAVYRKLGDAEVVDTLDMIRAFINTFGFIDEDRIAVMGWSYGGFLTSKIAIKDQGELVKCAISIAPVTDFKYYDSAYTERYLGQPAENLQGYINTNVIPHARNVTNVKYLLAHGERDDNVHYQNSARWSEALQQNGIHFTQLVYANEAHSLSHKLFHLYGEVQRFLMNDCFKSNLDLL</sequence>
<evidence type="ECO:0000250" key="1"/>
<evidence type="ECO:0000255" key="2"/>
<evidence type="ECO:0000269" key="3">
    <source>
    </source>
</evidence>
<evidence type="ECO:0000269" key="4">
    <source>
    </source>
</evidence>
<evidence type="ECO:0000269" key="5">
    <source ref="3"/>
</evidence>
<evidence type="ECO:0000305" key="6"/>
<dbReference type="EC" id="3.4.14.-"/>
<dbReference type="EMBL" id="Z69883">
    <property type="protein sequence ID" value="CAA93743.1"/>
    <property type="molecule type" value="Genomic_DNA"/>
</dbReference>
<dbReference type="PIR" id="T19514">
    <property type="entry name" value="T19514"/>
</dbReference>
<dbReference type="RefSeq" id="NP_510461.1">
    <property type="nucleotide sequence ID" value="NM_078060.11"/>
</dbReference>
<dbReference type="SMR" id="Q18253"/>
<dbReference type="FunCoup" id="Q18253">
    <property type="interactions" value="312"/>
</dbReference>
<dbReference type="STRING" id="6239.C27C12.7.2"/>
<dbReference type="ESTHER" id="caeel-C27C12.7">
    <property type="family name" value="DPP4N_Peptidase_S9"/>
</dbReference>
<dbReference type="MEROPS" id="S09.A74"/>
<dbReference type="GlyCosmos" id="Q18253">
    <property type="glycosylation" value="7 sites, No reported glycans"/>
</dbReference>
<dbReference type="iPTMnet" id="Q18253"/>
<dbReference type="PaxDb" id="6239-C27C12.7"/>
<dbReference type="PeptideAtlas" id="Q18253"/>
<dbReference type="EnsemblMetazoa" id="C27C12.7.1">
    <property type="protein sequence ID" value="C27C12.7.1"/>
    <property type="gene ID" value="WBGene00001055"/>
</dbReference>
<dbReference type="GeneID" id="181579"/>
<dbReference type="KEGG" id="cel:CELE_C27C12.7"/>
<dbReference type="UCSC" id="C27C12.7">
    <property type="organism name" value="c. elegans"/>
</dbReference>
<dbReference type="AGR" id="WB:WBGene00001055"/>
<dbReference type="CTD" id="181579"/>
<dbReference type="WormBase" id="C27C12.7">
    <property type="protein sequence ID" value="CE05324"/>
    <property type="gene ID" value="WBGene00001055"/>
    <property type="gene designation" value="dpf-2"/>
</dbReference>
<dbReference type="eggNOG" id="KOG2100">
    <property type="taxonomic scope" value="Eukaryota"/>
</dbReference>
<dbReference type="GeneTree" id="ENSGT00940000160454"/>
<dbReference type="HOGENOM" id="CLU_006105_4_0_1"/>
<dbReference type="InParanoid" id="Q18253"/>
<dbReference type="OMA" id="IWDSENH"/>
<dbReference type="OrthoDB" id="16520at2759"/>
<dbReference type="PhylomeDB" id="Q18253"/>
<dbReference type="Reactome" id="R-CEL-381771">
    <property type="pathway name" value="Synthesis, secretion, and inactivation of Glucagon-like Peptide-1 (GLP-1)"/>
</dbReference>
<dbReference type="PRO" id="PR:Q18253"/>
<dbReference type="Proteomes" id="UP000001940">
    <property type="component" value="Chromosome X"/>
</dbReference>
<dbReference type="Bgee" id="WBGene00001055">
    <property type="expression patterns" value="Expressed in material anatomical entity and 4 other cell types or tissues"/>
</dbReference>
<dbReference type="GO" id="GO:0005886">
    <property type="term" value="C:plasma membrane"/>
    <property type="evidence" value="ECO:0000318"/>
    <property type="project" value="GO_Central"/>
</dbReference>
<dbReference type="GO" id="GO:0004177">
    <property type="term" value="F:aminopeptidase activity"/>
    <property type="evidence" value="ECO:0007669"/>
    <property type="project" value="UniProtKB-KW"/>
</dbReference>
<dbReference type="GO" id="GO:0008239">
    <property type="term" value="F:dipeptidyl-peptidase activity"/>
    <property type="evidence" value="ECO:0000318"/>
    <property type="project" value="GO_Central"/>
</dbReference>
<dbReference type="GO" id="GO:0008236">
    <property type="term" value="F:serine-type peptidase activity"/>
    <property type="evidence" value="ECO:0007669"/>
    <property type="project" value="UniProtKB-KW"/>
</dbReference>
<dbReference type="GO" id="GO:0006508">
    <property type="term" value="P:proteolysis"/>
    <property type="evidence" value="ECO:0000318"/>
    <property type="project" value="GO_Central"/>
</dbReference>
<dbReference type="FunFam" id="3.40.50.1820:FF:000003">
    <property type="entry name" value="Dipeptidyl peptidase 4"/>
    <property type="match status" value="1"/>
</dbReference>
<dbReference type="Gene3D" id="3.40.50.1820">
    <property type="entry name" value="alpha/beta hydrolase"/>
    <property type="match status" value="1"/>
</dbReference>
<dbReference type="Gene3D" id="2.140.10.30">
    <property type="entry name" value="Dipeptidylpeptidase IV, N-terminal domain"/>
    <property type="match status" value="1"/>
</dbReference>
<dbReference type="InterPro" id="IPR029058">
    <property type="entry name" value="AB_hydrolase_fold"/>
</dbReference>
<dbReference type="InterPro" id="IPR001375">
    <property type="entry name" value="Peptidase_S9_cat"/>
</dbReference>
<dbReference type="InterPro" id="IPR002469">
    <property type="entry name" value="Peptidase_S9B_N"/>
</dbReference>
<dbReference type="InterPro" id="IPR050278">
    <property type="entry name" value="Serine_Prot_S9B/DPPIV"/>
</dbReference>
<dbReference type="PANTHER" id="PTHR11731:SF202">
    <property type="entry name" value="DIPEPTIDYL PEPTIDASE FAMILY MEMBER 2"/>
    <property type="match status" value="1"/>
</dbReference>
<dbReference type="PANTHER" id="PTHR11731">
    <property type="entry name" value="PROTEASE FAMILY S9B,C DIPEPTIDYL-PEPTIDASE IV-RELATED"/>
    <property type="match status" value="1"/>
</dbReference>
<dbReference type="Pfam" id="PF00930">
    <property type="entry name" value="DPPIV_N"/>
    <property type="match status" value="1"/>
</dbReference>
<dbReference type="Pfam" id="PF00326">
    <property type="entry name" value="Peptidase_S9"/>
    <property type="match status" value="1"/>
</dbReference>
<dbReference type="SUPFAM" id="SSF53474">
    <property type="entry name" value="alpha/beta-Hydrolases"/>
    <property type="match status" value="1"/>
</dbReference>
<dbReference type="SUPFAM" id="SSF82171">
    <property type="entry name" value="DPP6 N-terminal domain-like"/>
    <property type="match status" value="1"/>
</dbReference>
<feature type="chain" id="PRO_0000248535" description="Dipeptidyl peptidase family member 2">
    <location>
        <begin position="1"/>
        <end position="829"/>
    </location>
</feature>
<feature type="topological domain" description="Cytoplasmic" evidence="2">
    <location>
        <begin position="1"/>
        <end position="27"/>
    </location>
</feature>
<feature type="transmembrane region" description="Helical; Signal-anchor for type II membrane protein" evidence="2">
    <location>
        <begin position="28"/>
        <end position="48"/>
    </location>
</feature>
<feature type="topological domain" description="Extracellular" evidence="2">
    <location>
        <begin position="49"/>
        <end position="829"/>
    </location>
</feature>
<feature type="active site" description="Charge relay system" evidence="1">
    <location>
        <position position="691"/>
    </location>
</feature>
<feature type="active site" description="Charge relay system" evidence="1">
    <location>
        <position position="768"/>
    </location>
</feature>
<feature type="active site" description="Charge relay system" evidence="1">
    <location>
        <position position="800"/>
    </location>
</feature>
<feature type="glycosylation site" description="N-linked (GlcNAc...) asparagine" evidence="2">
    <location>
        <position position="61"/>
    </location>
</feature>
<feature type="glycosylation site" description="N-linked (GlcNAc...) asparagine" evidence="2">
    <location>
        <position position="66"/>
    </location>
</feature>
<feature type="glycosylation site" description="N-linked (GlcNAc...) asparagine" evidence="2">
    <location>
        <position position="183"/>
    </location>
</feature>
<feature type="glycosylation site" description="N-linked (GlcNAc...) asparagine" evidence="2">
    <location>
        <position position="209"/>
    </location>
</feature>
<feature type="glycosylation site" description="N-linked (GlcNAc...) asparagine" evidence="3 4">
    <location>
        <position position="314"/>
    </location>
</feature>
<feature type="glycosylation site" description="N-linked (GlcNAc...) asparagine" evidence="2">
    <location>
        <position position="359"/>
    </location>
</feature>
<feature type="glycosylation site" description="N-linked (GlcNAc...) asparagine" evidence="2">
    <location>
        <position position="754"/>
    </location>
</feature>
<feature type="disulfide bond" evidence="1">
    <location>
        <begin position="514"/>
        <end position="533"/>
    </location>
</feature>
<feature type="disulfide bond" evidence="1">
    <location>
        <begin position="711"/>
        <end position="821"/>
    </location>
</feature>
<reference key="1">
    <citation type="journal article" date="1998" name="Science">
        <title>Genome sequence of the nematode C. elegans: a platform for investigating biology.</title>
        <authorList>
            <consortium name="The C. elegans sequencing consortium"/>
        </authorList>
    </citation>
    <scope>NUCLEOTIDE SEQUENCE [LARGE SCALE GENOMIC DNA]</scope>
    <source>
        <strain>Bristol N2</strain>
    </source>
</reference>
<reference key="2">
    <citation type="journal article" date="2003" name="Nat. Biotechnol.">
        <title>Lectin affinity capture, isotope-coded tagging and mass spectrometry to identify N-linked glycoproteins.</title>
        <authorList>
            <person name="Kaji H."/>
            <person name="Saito H."/>
            <person name="Yamauchi Y."/>
            <person name="Shinkawa T."/>
            <person name="Taoka M."/>
            <person name="Hirabayashi J."/>
            <person name="Kasai K."/>
            <person name="Takahashi N."/>
            <person name="Isobe T."/>
        </authorList>
    </citation>
    <scope>GLYCOSYLATION [LARGE SCALE ANALYSIS] AT ASN-314</scope>
    <scope>IDENTIFICATION BY MASS SPECTROMETRY</scope>
    <source>
        <strain>Bristol N2</strain>
    </source>
</reference>
<reference key="3">
    <citation type="book" date="2005" name="Proceedings of the 15th international C. elegans meeting">
        <title>Dipeptidyl peptidase IV-like protease family is essential for control of distal tip cell migration in C. elegans.</title>
        <authorList>
            <person name="Yoshina S."/>
            <person name="Gengyo-Ando K."/>
            <person name="Mitani S."/>
            <person name="Iino Y."/>
            <person name="Inoue H."/>
            <person name="Takahashi K."/>
        </authorList>
    </citation>
    <scope>FUNCTION</scope>
</reference>
<reference key="4">
    <citation type="journal article" date="2007" name="Mol. Cell. Proteomics">
        <title>Proteomics reveals N-linked glycoprotein diversity in Caenorhabditis elegans and suggests an atypical translocation mechanism for integral membrane proteins.</title>
        <authorList>
            <person name="Kaji H."/>
            <person name="Kamiie J."/>
            <person name="Kawakami H."/>
            <person name="Kido K."/>
            <person name="Yamauchi Y."/>
            <person name="Shinkawa T."/>
            <person name="Taoka M."/>
            <person name="Takahashi N."/>
            <person name="Isobe T."/>
        </authorList>
    </citation>
    <scope>GLYCOSYLATION [LARGE SCALE ANALYSIS] AT ASN-314</scope>
    <scope>IDENTIFICATION BY MASS SPECTROMETRY</scope>
    <source>
        <strain>Bristol N2</strain>
    </source>
</reference>
<proteinExistence type="evidence at protein level"/>
<organism>
    <name type="scientific">Caenorhabditis elegans</name>
    <dbReference type="NCBI Taxonomy" id="6239"/>
    <lineage>
        <taxon>Eukaryota</taxon>
        <taxon>Metazoa</taxon>
        <taxon>Ecdysozoa</taxon>
        <taxon>Nematoda</taxon>
        <taxon>Chromadorea</taxon>
        <taxon>Rhabditida</taxon>
        <taxon>Rhabditina</taxon>
        <taxon>Rhabditomorpha</taxon>
        <taxon>Rhabditoidea</taxon>
        <taxon>Rhabditidae</taxon>
        <taxon>Peloderinae</taxon>
        <taxon>Caenorhabditis</taxon>
    </lineage>
</organism>
<comment type="function">
    <text evidence="1 5">Removes N-terminal dipeptides sequentially from polypeptides (By similarity). Essential for control of distal tip cell migration.</text>
</comment>
<comment type="subcellular location">
    <subcellularLocation>
        <location evidence="1">Cell membrane</location>
        <topology evidence="1">Single-pass type II membrane protein</topology>
    </subcellularLocation>
</comment>
<comment type="similarity">
    <text evidence="6">Belongs to the peptidase S9B family. DPPIV subfamily.</text>
</comment>
<gene>
    <name type="primary">dpf-2</name>
    <name type="ORF">C27C12.7</name>
</gene>